<comment type="function">
    <text evidence="1">Involved in mRNA degradation. Catalyzes the phosphorolysis of single-stranded polyribonucleotides processively in the 3'- to 5'-direction.</text>
</comment>
<comment type="catalytic activity">
    <reaction evidence="1">
        <text>RNA(n+1) + phosphate = RNA(n) + a ribonucleoside 5'-diphosphate</text>
        <dbReference type="Rhea" id="RHEA:22096"/>
        <dbReference type="Rhea" id="RHEA-COMP:14527"/>
        <dbReference type="Rhea" id="RHEA-COMP:17342"/>
        <dbReference type="ChEBI" id="CHEBI:43474"/>
        <dbReference type="ChEBI" id="CHEBI:57930"/>
        <dbReference type="ChEBI" id="CHEBI:140395"/>
        <dbReference type="EC" id="2.7.7.8"/>
    </reaction>
</comment>
<comment type="cofactor">
    <cofactor evidence="1">
        <name>Mg(2+)</name>
        <dbReference type="ChEBI" id="CHEBI:18420"/>
    </cofactor>
</comment>
<comment type="subcellular location">
    <subcellularLocation>
        <location evidence="1">Cytoplasm</location>
    </subcellularLocation>
</comment>
<comment type="similarity">
    <text evidence="1">Belongs to the polyribonucleotide nucleotidyltransferase family.</text>
</comment>
<feature type="chain" id="PRO_0000329588" description="Polyribonucleotide nucleotidyltransferase">
    <location>
        <begin position="1"/>
        <end position="755"/>
    </location>
</feature>
<feature type="domain" description="KH" evidence="1">
    <location>
        <begin position="560"/>
        <end position="619"/>
    </location>
</feature>
<feature type="domain" description="S1 motif" evidence="1">
    <location>
        <begin position="629"/>
        <end position="698"/>
    </location>
</feature>
<feature type="region of interest" description="Disordered" evidence="2">
    <location>
        <begin position="699"/>
        <end position="755"/>
    </location>
</feature>
<feature type="compositionally biased region" description="Basic and acidic residues" evidence="2">
    <location>
        <begin position="719"/>
        <end position="755"/>
    </location>
</feature>
<feature type="binding site" evidence="1">
    <location>
        <position position="493"/>
    </location>
    <ligand>
        <name>Mg(2+)</name>
        <dbReference type="ChEBI" id="CHEBI:18420"/>
    </ligand>
</feature>
<feature type="binding site" evidence="1">
    <location>
        <position position="499"/>
    </location>
    <ligand>
        <name>Mg(2+)</name>
        <dbReference type="ChEBI" id="CHEBI:18420"/>
    </ligand>
</feature>
<dbReference type="EC" id="2.7.7.8" evidence="1"/>
<dbReference type="EMBL" id="CP000909">
    <property type="protein sequence ID" value="ABY35259.1"/>
    <property type="molecule type" value="Genomic_DNA"/>
</dbReference>
<dbReference type="RefSeq" id="WP_012257913.1">
    <property type="nucleotide sequence ID" value="NC_010175.1"/>
</dbReference>
<dbReference type="RefSeq" id="YP_001635648.1">
    <property type="nucleotide sequence ID" value="NC_010175.1"/>
</dbReference>
<dbReference type="SMR" id="A9WEJ7"/>
<dbReference type="FunCoup" id="A9WEJ7">
    <property type="interactions" value="510"/>
</dbReference>
<dbReference type="STRING" id="324602.Caur_2047"/>
<dbReference type="EnsemblBacteria" id="ABY35259">
    <property type="protein sequence ID" value="ABY35259"/>
    <property type="gene ID" value="Caur_2047"/>
</dbReference>
<dbReference type="KEGG" id="cau:Caur_2047"/>
<dbReference type="PATRIC" id="fig|324602.8.peg.2324"/>
<dbReference type="eggNOG" id="COG1185">
    <property type="taxonomic scope" value="Bacteria"/>
</dbReference>
<dbReference type="HOGENOM" id="CLU_004217_2_2_0"/>
<dbReference type="InParanoid" id="A9WEJ7"/>
<dbReference type="Proteomes" id="UP000002008">
    <property type="component" value="Chromosome"/>
</dbReference>
<dbReference type="GO" id="GO:0005829">
    <property type="term" value="C:cytosol"/>
    <property type="evidence" value="ECO:0000318"/>
    <property type="project" value="GO_Central"/>
</dbReference>
<dbReference type="GO" id="GO:0000175">
    <property type="term" value="F:3'-5'-RNA exonuclease activity"/>
    <property type="evidence" value="ECO:0000318"/>
    <property type="project" value="GO_Central"/>
</dbReference>
<dbReference type="GO" id="GO:0000287">
    <property type="term" value="F:magnesium ion binding"/>
    <property type="evidence" value="ECO:0007669"/>
    <property type="project" value="UniProtKB-UniRule"/>
</dbReference>
<dbReference type="GO" id="GO:0004654">
    <property type="term" value="F:polyribonucleotide nucleotidyltransferase activity"/>
    <property type="evidence" value="ECO:0000318"/>
    <property type="project" value="GO_Central"/>
</dbReference>
<dbReference type="GO" id="GO:0003723">
    <property type="term" value="F:RNA binding"/>
    <property type="evidence" value="ECO:0007669"/>
    <property type="project" value="UniProtKB-UniRule"/>
</dbReference>
<dbReference type="GO" id="GO:0006402">
    <property type="term" value="P:mRNA catabolic process"/>
    <property type="evidence" value="ECO:0007669"/>
    <property type="project" value="UniProtKB-UniRule"/>
</dbReference>
<dbReference type="GO" id="GO:0006401">
    <property type="term" value="P:RNA catabolic process"/>
    <property type="evidence" value="ECO:0000318"/>
    <property type="project" value="GO_Central"/>
</dbReference>
<dbReference type="GO" id="GO:0006396">
    <property type="term" value="P:RNA processing"/>
    <property type="evidence" value="ECO:0007669"/>
    <property type="project" value="InterPro"/>
</dbReference>
<dbReference type="CDD" id="cd02393">
    <property type="entry name" value="KH-I_PNPase"/>
    <property type="match status" value="1"/>
</dbReference>
<dbReference type="CDD" id="cd11363">
    <property type="entry name" value="RNase_PH_PNPase_1"/>
    <property type="match status" value="1"/>
</dbReference>
<dbReference type="CDD" id="cd11364">
    <property type="entry name" value="RNase_PH_PNPase_2"/>
    <property type="match status" value="1"/>
</dbReference>
<dbReference type="CDD" id="cd04472">
    <property type="entry name" value="S1_PNPase"/>
    <property type="match status" value="1"/>
</dbReference>
<dbReference type="FunFam" id="3.30.1370.10:FF:000001">
    <property type="entry name" value="Polyribonucleotide nucleotidyltransferase"/>
    <property type="match status" value="1"/>
</dbReference>
<dbReference type="FunFam" id="3.30.230.70:FF:000001">
    <property type="entry name" value="Polyribonucleotide nucleotidyltransferase"/>
    <property type="match status" value="1"/>
</dbReference>
<dbReference type="FunFam" id="3.30.230.70:FF:000002">
    <property type="entry name" value="Polyribonucleotide nucleotidyltransferase"/>
    <property type="match status" value="1"/>
</dbReference>
<dbReference type="FunFam" id="2.40.50.140:FF:000189">
    <property type="entry name" value="Polyribonucleotide nucleotidyltransferase, putative"/>
    <property type="match status" value="1"/>
</dbReference>
<dbReference type="Gene3D" id="3.30.230.70">
    <property type="entry name" value="GHMP Kinase, N-terminal domain"/>
    <property type="match status" value="2"/>
</dbReference>
<dbReference type="Gene3D" id="3.30.1370.10">
    <property type="entry name" value="K Homology domain, type 1"/>
    <property type="match status" value="1"/>
</dbReference>
<dbReference type="Gene3D" id="2.40.50.140">
    <property type="entry name" value="Nucleic acid-binding proteins"/>
    <property type="match status" value="1"/>
</dbReference>
<dbReference type="HAMAP" id="MF_01595">
    <property type="entry name" value="PNPase"/>
    <property type="match status" value="1"/>
</dbReference>
<dbReference type="InterPro" id="IPR001247">
    <property type="entry name" value="ExoRNase_PH_dom1"/>
</dbReference>
<dbReference type="InterPro" id="IPR015847">
    <property type="entry name" value="ExoRNase_PH_dom2"/>
</dbReference>
<dbReference type="InterPro" id="IPR036345">
    <property type="entry name" value="ExoRNase_PH_dom2_sf"/>
</dbReference>
<dbReference type="InterPro" id="IPR004087">
    <property type="entry name" value="KH_dom"/>
</dbReference>
<dbReference type="InterPro" id="IPR004088">
    <property type="entry name" value="KH_dom_type_1"/>
</dbReference>
<dbReference type="InterPro" id="IPR036612">
    <property type="entry name" value="KH_dom_type_1_sf"/>
</dbReference>
<dbReference type="InterPro" id="IPR012340">
    <property type="entry name" value="NA-bd_OB-fold"/>
</dbReference>
<dbReference type="InterPro" id="IPR012162">
    <property type="entry name" value="PNPase"/>
</dbReference>
<dbReference type="InterPro" id="IPR027408">
    <property type="entry name" value="PNPase/RNase_PH_dom_sf"/>
</dbReference>
<dbReference type="InterPro" id="IPR015848">
    <property type="entry name" value="PNPase_PH_RNA-bd_bac/org-type"/>
</dbReference>
<dbReference type="InterPro" id="IPR036456">
    <property type="entry name" value="PNPase_PH_RNA-bd_sf"/>
</dbReference>
<dbReference type="InterPro" id="IPR020568">
    <property type="entry name" value="Ribosomal_Su5_D2-typ_SF"/>
</dbReference>
<dbReference type="InterPro" id="IPR003029">
    <property type="entry name" value="S1_domain"/>
</dbReference>
<dbReference type="NCBIfam" id="TIGR03591">
    <property type="entry name" value="polynuc_phos"/>
    <property type="match status" value="1"/>
</dbReference>
<dbReference type="NCBIfam" id="NF008805">
    <property type="entry name" value="PRK11824.1"/>
    <property type="match status" value="1"/>
</dbReference>
<dbReference type="PANTHER" id="PTHR11252">
    <property type="entry name" value="POLYRIBONUCLEOTIDE NUCLEOTIDYLTRANSFERASE"/>
    <property type="match status" value="1"/>
</dbReference>
<dbReference type="PANTHER" id="PTHR11252:SF0">
    <property type="entry name" value="POLYRIBONUCLEOTIDE NUCLEOTIDYLTRANSFERASE 1, MITOCHONDRIAL"/>
    <property type="match status" value="1"/>
</dbReference>
<dbReference type="Pfam" id="PF00013">
    <property type="entry name" value="KH_1"/>
    <property type="match status" value="1"/>
</dbReference>
<dbReference type="Pfam" id="PF03726">
    <property type="entry name" value="PNPase"/>
    <property type="match status" value="1"/>
</dbReference>
<dbReference type="Pfam" id="PF01138">
    <property type="entry name" value="RNase_PH"/>
    <property type="match status" value="2"/>
</dbReference>
<dbReference type="Pfam" id="PF03725">
    <property type="entry name" value="RNase_PH_C"/>
    <property type="match status" value="2"/>
</dbReference>
<dbReference type="Pfam" id="PF00575">
    <property type="entry name" value="S1"/>
    <property type="match status" value="1"/>
</dbReference>
<dbReference type="PIRSF" id="PIRSF005499">
    <property type="entry name" value="PNPase"/>
    <property type="match status" value="1"/>
</dbReference>
<dbReference type="SMART" id="SM00322">
    <property type="entry name" value="KH"/>
    <property type="match status" value="1"/>
</dbReference>
<dbReference type="SMART" id="SM00316">
    <property type="entry name" value="S1"/>
    <property type="match status" value="1"/>
</dbReference>
<dbReference type="SUPFAM" id="SSF54791">
    <property type="entry name" value="Eukaryotic type KH-domain (KH-domain type I)"/>
    <property type="match status" value="1"/>
</dbReference>
<dbReference type="SUPFAM" id="SSF50249">
    <property type="entry name" value="Nucleic acid-binding proteins"/>
    <property type="match status" value="1"/>
</dbReference>
<dbReference type="SUPFAM" id="SSF46915">
    <property type="entry name" value="Polynucleotide phosphorylase/guanosine pentaphosphate synthase (PNPase/GPSI), domain 3"/>
    <property type="match status" value="1"/>
</dbReference>
<dbReference type="SUPFAM" id="SSF55666">
    <property type="entry name" value="Ribonuclease PH domain 2-like"/>
    <property type="match status" value="2"/>
</dbReference>
<dbReference type="SUPFAM" id="SSF54211">
    <property type="entry name" value="Ribosomal protein S5 domain 2-like"/>
    <property type="match status" value="2"/>
</dbReference>
<dbReference type="PROSITE" id="PS50084">
    <property type="entry name" value="KH_TYPE_1"/>
    <property type="match status" value="1"/>
</dbReference>
<dbReference type="PROSITE" id="PS50126">
    <property type="entry name" value="S1"/>
    <property type="match status" value="1"/>
</dbReference>
<organism>
    <name type="scientific">Chloroflexus aurantiacus (strain ATCC 29366 / DSM 635 / J-10-fl)</name>
    <dbReference type="NCBI Taxonomy" id="324602"/>
    <lineage>
        <taxon>Bacteria</taxon>
        <taxon>Bacillati</taxon>
        <taxon>Chloroflexota</taxon>
        <taxon>Chloroflexia</taxon>
        <taxon>Chloroflexales</taxon>
        <taxon>Chloroflexineae</taxon>
        <taxon>Chloroflexaceae</taxon>
        <taxon>Chloroflexus</taxon>
    </lineage>
</organism>
<accession>A9WEJ7</accession>
<gene>
    <name evidence="1" type="primary">pnp</name>
    <name type="ordered locus">Caur_2047</name>
</gene>
<sequence length="755" mass="82432">MTERNIYSVSAEIAGRTLTLEAGRFAEQADGAVVARYGDTMLLATVVCAKEAREGTDFFPLTVDYEEKMYAVGKIPGNFFKREGRPTTTAILISRLTDRPLRPLFPKGFYNEVQVIITTFSIDMENDPGPLAIIAASAALCISDIPFAGPVGAVQMGHLNGQLVVNPKMNEIADSRLDLVVAGTKDAVLMVEAGAYELTEDEMLQAVIDGHAVCKQICDLQEQLVQLCGKPKRPFTPPVVDTSLEEAISAWMGDRLRKAVRSPIKQEREAQTEALKAEVIAHFTADEPEEEIANRTKEVTKAFEKLLKDEVRNAILDEGIRVDGRALDEIRPISIEVGVIPRVHGSAVFTRGQTQVLTITTLGSPGDEQKVDDLGIETSKRYIHHYNFPPFSTGEVRRIGTPRRRDIGHGALAERSLYAVLPDEKDFPYTIRLVSEVLSSNGSSSMASVCGSSLSLMDAGVPIKAPVAGVAMGLITGEDGRWRVLTDIQGLEDALGDMDFKVAGTAKGVTGLQMDIKTTGITYEIMREAFAQARAGRLFILDKMNEVISAPRPELSIYAPRIMTIQIPVDKIGALIGPGGKTIRNICETTGAQIDIEDDGRVFITTPDGAAARQAISMIEGLTREAKVGDIFLGKVVSIKPFGAFVNILPGKDGMVHVSELDEKRVENVEDVVSLGDEINVMVIDIDRTTGKISLSRRAVLTGETPEERKAAGAAPRPRPREEQRGGRDEPRSLRDELRGPRREGDRPRPRRRDD</sequence>
<keyword id="KW-0963">Cytoplasm</keyword>
<keyword id="KW-0460">Magnesium</keyword>
<keyword id="KW-0479">Metal-binding</keyword>
<keyword id="KW-0548">Nucleotidyltransferase</keyword>
<keyword id="KW-1185">Reference proteome</keyword>
<keyword id="KW-0694">RNA-binding</keyword>
<keyword id="KW-0808">Transferase</keyword>
<evidence type="ECO:0000255" key="1">
    <source>
        <dbReference type="HAMAP-Rule" id="MF_01595"/>
    </source>
</evidence>
<evidence type="ECO:0000256" key="2">
    <source>
        <dbReference type="SAM" id="MobiDB-lite"/>
    </source>
</evidence>
<protein>
    <recommendedName>
        <fullName evidence="1">Polyribonucleotide nucleotidyltransferase</fullName>
        <ecNumber evidence="1">2.7.7.8</ecNumber>
    </recommendedName>
    <alternativeName>
        <fullName evidence="1">Polynucleotide phosphorylase</fullName>
        <shortName evidence="1">PNPase</shortName>
    </alternativeName>
</protein>
<proteinExistence type="inferred from homology"/>
<reference key="1">
    <citation type="journal article" date="2011" name="BMC Genomics">
        <title>Complete genome sequence of the filamentous anoxygenic phototrophic bacterium Chloroflexus aurantiacus.</title>
        <authorList>
            <person name="Tang K.H."/>
            <person name="Barry K."/>
            <person name="Chertkov O."/>
            <person name="Dalin E."/>
            <person name="Han C.S."/>
            <person name="Hauser L.J."/>
            <person name="Honchak B.M."/>
            <person name="Karbach L.E."/>
            <person name="Land M.L."/>
            <person name="Lapidus A."/>
            <person name="Larimer F.W."/>
            <person name="Mikhailova N."/>
            <person name="Pitluck S."/>
            <person name="Pierson B.K."/>
            <person name="Blankenship R.E."/>
        </authorList>
    </citation>
    <scope>NUCLEOTIDE SEQUENCE [LARGE SCALE GENOMIC DNA]</scope>
    <source>
        <strain>ATCC 29366 / DSM 635 / J-10-fl</strain>
    </source>
</reference>
<name>PNP_CHLAA</name>